<name>PG155_CAMPM</name>
<keyword id="KW-1015">Disulfide bond</keyword>
<keyword id="KW-1168">Fusion of virus membrane with host membrane</keyword>
<keyword id="KW-0426">Late protein</keyword>
<keyword id="KW-0472">Membrane</keyword>
<keyword id="KW-0597">Phosphoprotein</keyword>
<keyword id="KW-0735">Signal-anchor</keyword>
<keyword id="KW-0812">Transmembrane</keyword>
<keyword id="KW-1133">Transmembrane helix</keyword>
<keyword id="KW-0261">Viral envelope protein</keyword>
<keyword id="KW-1162">Viral penetration into host cytoplasm</keyword>
<keyword id="KW-0946">Virion</keyword>
<keyword id="KW-1160">Virus entry into host cell</keyword>
<organismHost>
    <name type="scientific">Camelus</name>
    <dbReference type="NCBI Taxonomy" id="9836"/>
</organismHost>
<accession>P68557</accession>
<accession>Q8V2M7</accession>
<comment type="function">
    <text evidence="1">Envelope protein required for virus entry into host cell and for cell-cell fusion (syncytium formation).</text>
</comment>
<comment type="subunit">
    <text evidence="1">Part of a stable entry-fusion complex (EFC) which is at least composed of proteins OPG143, OPG147, OPG155, OPG086, OPG094, OPG107, OPG104, and OPG099. Formation of the viral membrane is necessary for the assembly of the complex. Interacts directly with protein OPG107.</text>
</comment>
<comment type="subcellular location">
    <subcellularLocation>
        <location evidence="1">Virion membrane</location>
        <topology evidence="1">Single-pass type III membrane protein</topology>
    </subcellularLocation>
    <text evidence="1">Component of the mature virion (MV) membrane.</text>
</comment>
<comment type="PTM">
    <text evidence="1">Contains two intramolecular disulfide bonds. They are created by the viral disulfide bond formation pathway, a poxvirus-specific pathway that operates on the cytoplasmic side of the MV membranes.</text>
</comment>
<comment type="similarity">
    <text evidence="3">Belongs to the orthopoxvirus OPG155 protein family.</text>
</comment>
<organism>
    <name type="scientific">Camelpox virus (strain M-96)</name>
    <dbReference type="NCBI Taxonomy" id="203173"/>
    <lineage>
        <taxon>Viruses</taxon>
        <taxon>Varidnaviria</taxon>
        <taxon>Bamfordvirae</taxon>
        <taxon>Nucleocytoviricota</taxon>
        <taxon>Pokkesviricetes</taxon>
        <taxon>Chitovirales</taxon>
        <taxon>Poxviridae</taxon>
        <taxon>Chordopoxvirinae</taxon>
        <taxon>Orthopoxvirus</taxon>
        <taxon>Camelpox virus</taxon>
    </lineage>
</organism>
<proteinExistence type="inferred from homology"/>
<evidence type="ECO:0000250" key="1">
    <source>
        <dbReference type="UniProtKB" id="P68633"/>
    </source>
</evidence>
<evidence type="ECO:0000255" key="2"/>
<evidence type="ECO:0000305" key="3"/>
<feature type="chain" id="PRO_0000099285" description="Envelope protein OPG155">
    <location>
        <begin position="1"/>
        <end position="146"/>
    </location>
</feature>
<feature type="transmembrane region" description="Helical; Signal-anchor for type II membrane protein" evidence="2">
    <location>
        <begin position="1"/>
        <end position="21"/>
    </location>
</feature>
<feature type="topological domain" description="Virion surface" evidence="2">
    <location>
        <begin position="22"/>
        <end position="146"/>
    </location>
</feature>
<reference key="1">
    <citation type="journal article" date="2002" name="Virology">
        <title>The genome of camelpox virus.</title>
        <authorList>
            <person name="Afonso C.L."/>
            <person name="Tulman E.R."/>
            <person name="Lu Z."/>
            <person name="Zsak L."/>
            <person name="Sandybaev N.T."/>
            <person name="Kerembekova U.Z."/>
            <person name="Zaitsev V.L."/>
            <person name="Kutish G.F."/>
            <person name="Rock D.L."/>
        </authorList>
    </citation>
    <scope>NUCLEOTIDE SEQUENCE [LARGE SCALE GENOMIC DNA]</scope>
</reference>
<sequence length="146" mass="16210">MNSLSIFFIVVATAAVCLLFIQGYSIYENYGNIKEFNATHAALEYSKSIGGTPALDRRVQDVNDTISDVKQKWRCVAYPGNGFVSASIFGFQAEVGPNNTRSIRKFNTMAQCIDFTFSDVINIDIYNPCVAPNINNVECQFLKSVL</sequence>
<gene>
    <name type="primary">OPG155</name>
    <name type="ordered locus">CMLV147</name>
</gene>
<dbReference type="EMBL" id="AF438165">
    <property type="protein sequence ID" value="AAL73854.1"/>
    <property type="molecule type" value="Genomic_DNA"/>
</dbReference>
<dbReference type="RefSeq" id="NP_570537.1">
    <property type="nucleotide sequence ID" value="NC_003391.1"/>
</dbReference>
<dbReference type="SMR" id="P68557"/>
<dbReference type="KEGG" id="vg:932631"/>
<dbReference type="Proteomes" id="UP000152221">
    <property type="component" value="Genome"/>
</dbReference>
<dbReference type="GO" id="GO:0016020">
    <property type="term" value="C:membrane"/>
    <property type="evidence" value="ECO:0007669"/>
    <property type="project" value="UniProtKB-KW"/>
</dbReference>
<dbReference type="GO" id="GO:0019031">
    <property type="term" value="C:viral envelope"/>
    <property type="evidence" value="ECO:0007669"/>
    <property type="project" value="UniProtKB-KW"/>
</dbReference>
<dbReference type="GO" id="GO:0055036">
    <property type="term" value="C:virion membrane"/>
    <property type="evidence" value="ECO:0007669"/>
    <property type="project" value="UniProtKB-SubCell"/>
</dbReference>
<dbReference type="GO" id="GO:0039663">
    <property type="term" value="P:membrane fusion involved in viral entry into host cell"/>
    <property type="evidence" value="ECO:0007669"/>
    <property type="project" value="UniProtKB-KW"/>
</dbReference>
<dbReference type="GO" id="GO:0046718">
    <property type="term" value="P:symbiont entry into host cell"/>
    <property type="evidence" value="ECO:0007669"/>
    <property type="project" value="UniProtKB-KW"/>
</dbReference>
<dbReference type="InterPro" id="IPR007664">
    <property type="entry name" value="Poxvirus_A28"/>
</dbReference>
<dbReference type="Pfam" id="PF04584">
    <property type="entry name" value="Pox_A28"/>
    <property type="match status" value="1"/>
</dbReference>
<protein>
    <recommendedName>
        <fullName>Envelope protein OPG155</fullName>
    </recommendedName>
    <alternativeName>
        <fullName>Protein CMLV147</fullName>
    </alternativeName>
</protein>